<comment type="function">
    <text evidence="1">Attaches a formyl group to the free amino group of methionyl-tRNA(fMet). The formyl group appears to play a dual role in the initiator identity of N-formylmethionyl-tRNA by promoting its recognition by IF2 and preventing the misappropriation of this tRNA by the elongation apparatus.</text>
</comment>
<comment type="catalytic activity">
    <reaction evidence="1">
        <text>L-methionyl-tRNA(fMet) + (6R)-10-formyltetrahydrofolate = N-formyl-L-methionyl-tRNA(fMet) + (6S)-5,6,7,8-tetrahydrofolate + H(+)</text>
        <dbReference type="Rhea" id="RHEA:24380"/>
        <dbReference type="Rhea" id="RHEA-COMP:9952"/>
        <dbReference type="Rhea" id="RHEA-COMP:9953"/>
        <dbReference type="ChEBI" id="CHEBI:15378"/>
        <dbReference type="ChEBI" id="CHEBI:57453"/>
        <dbReference type="ChEBI" id="CHEBI:78530"/>
        <dbReference type="ChEBI" id="CHEBI:78844"/>
        <dbReference type="ChEBI" id="CHEBI:195366"/>
        <dbReference type="EC" id="2.1.2.9"/>
    </reaction>
</comment>
<comment type="similarity">
    <text evidence="1 2">Belongs to the Fmt family.</text>
</comment>
<keyword id="KW-0648">Protein biosynthesis</keyword>
<keyword id="KW-1185">Reference proteome</keyword>
<keyword id="KW-0808">Transferase</keyword>
<reference key="1">
    <citation type="journal article" date="1999" name="Nature">
        <title>Evidence for lateral gene transfer between Archaea and Bacteria from genome sequence of Thermotoga maritima.</title>
        <authorList>
            <person name="Nelson K.E."/>
            <person name="Clayton R.A."/>
            <person name="Gill S.R."/>
            <person name="Gwinn M.L."/>
            <person name="Dodson R.J."/>
            <person name="Haft D.H."/>
            <person name="Hickey E.K."/>
            <person name="Peterson J.D."/>
            <person name="Nelson W.C."/>
            <person name="Ketchum K.A."/>
            <person name="McDonald L.A."/>
            <person name="Utterback T.R."/>
            <person name="Malek J.A."/>
            <person name="Linher K.D."/>
            <person name="Garrett M.M."/>
            <person name="Stewart A.M."/>
            <person name="Cotton M.D."/>
            <person name="Pratt M.S."/>
            <person name="Phillips C.A."/>
            <person name="Richardson D.L."/>
            <person name="Heidelberg J.F."/>
            <person name="Sutton G.G."/>
            <person name="Fleischmann R.D."/>
            <person name="Eisen J.A."/>
            <person name="White O."/>
            <person name="Salzberg S.L."/>
            <person name="Smith H.O."/>
            <person name="Venter J.C."/>
            <person name="Fraser C.M."/>
        </authorList>
    </citation>
    <scope>NUCLEOTIDE SEQUENCE [LARGE SCALE GENOMIC DNA]</scope>
    <source>
        <strain>ATCC 43589 / DSM 3109 / JCM 10099 / NBRC 100826 / MSB8</strain>
    </source>
</reference>
<protein>
    <recommendedName>
        <fullName evidence="1">Methionyl-tRNA formyltransferase</fullName>
        <ecNumber evidence="1">2.1.2.9</ecNumber>
    </recommendedName>
</protein>
<accession>Q9WYZ8</accession>
<gene>
    <name evidence="1" type="primary">fmt</name>
    <name type="ordered locus">TM_0528</name>
</gene>
<proteinExistence type="inferred from homology"/>
<organism>
    <name type="scientific">Thermotoga maritima (strain ATCC 43589 / DSM 3109 / JCM 10099 / NBRC 100826 / MSB8)</name>
    <dbReference type="NCBI Taxonomy" id="243274"/>
    <lineage>
        <taxon>Bacteria</taxon>
        <taxon>Thermotogati</taxon>
        <taxon>Thermotogota</taxon>
        <taxon>Thermotogae</taxon>
        <taxon>Thermotogales</taxon>
        <taxon>Thermotogaceae</taxon>
        <taxon>Thermotoga</taxon>
    </lineage>
</organism>
<evidence type="ECO:0000255" key="1">
    <source>
        <dbReference type="HAMAP-Rule" id="MF_00182"/>
    </source>
</evidence>
<evidence type="ECO:0000305" key="2"/>
<sequence>MRIVFVGTPEFAAEILEHLIKNGFNVVGVVTQPDKPRGRGRKVAPTPVKAVAEKHEVPFIQPESINKKEALEFLRSVRPDVIIVASYGKILGEKVLSLPRLGCYNIHPSLLPKYRGASPIQRVLENGEERTGVTIYKMVKELDAGPIALQKEISVDPFETFDQLEKRLIELSKEMLIEFLEKLKTGNIELKEQDHSRATYAPMIKKEDLIVDFSKDAESVKNKIRAYDSRPGARAFLGNVEVKLFGVTAIDSSGDEPGLINYIDREGAWIGTGDGKVKVRYIQFPGKKKMTFWEAKNGRLIIEGMRFERRYES</sequence>
<name>FMT_THEMA</name>
<feature type="chain" id="PRO_0000083071" description="Methionyl-tRNA formyltransferase">
    <location>
        <begin position="1"/>
        <end position="313"/>
    </location>
</feature>
<feature type="binding site" evidence="1">
    <location>
        <begin position="109"/>
        <end position="112"/>
    </location>
    <ligand>
        <name>(6S)-5,6,7,8-tetrahydrofolate</name>
        <dbReference type="ChEBI" id="CHEBI:57453"/>
    </ligand>
</feature>
<dbReference type="EC" id="2.1.2.9" evidence="1"/>
<dbReference type="EMBL" id="AE000512">
    <property type="protein sequence ID" value="AAD35613.1"/>
    <property type="molecule type" value="Genomic_DNA"/>
</dbReference>
<dbReference type="PIR" id="F72366">
    <property type="entry name" value="F72366"/>
</dbReference>
<dbReference type="RefSeq" id="NP_228338.1">
    <property type="nucleotide sequence ID" value="NC_000853.1"/>
</dbReference>
<dbReference type="RefSeq" id="WP_004081384.1">
    <property type="nucleotide sequence ID" value="NC_000853.1"/>
</dbReference>
<dbReference type="SMR" id="Q9WYZ8"/>
<dbReference type="FunCoup" id="Q9WYZ8">
    <property type="interactions" value="363"/>
</dbReference>
<dbReference type="STRING" id="243274.TM_0528"/>
<dbReference type="PaxDb" id="243274-THEMA_02035"/>
<dbReference type="EnsemblBacteria" id="AAD35613">
    <property type="protein sequence ID" value="AAD35613"/>
    <property type="gene ID" value="TM_0528"/>
</dbReference>
<dbReference type="KEGG" id="tma:TM0528"/>
<dbReference type="KEGG" id="tmi:THEMA_02035"/>
<dbReference type="KEGG" id="tmm:Tmari_0525"/>
<dbReference type="KEGG" id="tmw:THMA_0541"/>
<dbReference type="eggNOG" id="COG0223">
    <property type="taxonomic scope" value="Bacteria"/>
</dbReference>
<dbReference type="InParanoid" id="Q9WYZ8"/>
<dbReference type="OrthoDB" id="9802815at2"/>
<dbReference type="Proteomes" id="UP000008183">
    <property type="component" value="Chromosome"/>
</dbReference>
<dbReference type="GO" id="GO:0005829">
    <property type="term" value="C:cytosol"/>
    <property type="evidence" value="ECO:0000318"/>
    <property type="project" value="GO_Central"/>
</dbReference>
<dbReference type="GO" id="GO:0004479">
    <property type="term" value="F:methionyl-tRNA formyltransferase activity"/>
    <property type="evidence" value="ECO:0000318"/>
    <property type="project" value="GO_Central"/>
</dbReference>
<dbReference type="GO" id="GO:0071951">
    <property type="term" value="P:conversion of methionyl-tRNA to N-formyl-methionyl-tRNA"/>
    <property type="evidence" value="ECO:0000318"/>
    <property type="project" value="GO_Central"/>
</dbReference>
<dbReference type="CDD" id="cd08646">
    <property type="entry name" value="FMT_core_Met-tRNA-FMT_N"/>
    <property type="match status" value="1"/>
</dbReference>
<dbReference type="CDD" id="cd08704">
    <property type="entry name" value="Met_tRNA_FMT_C"/>
    <property type="match status" value="1"/>
</dbReference>
<dbReference type="FunFam" id="3.40.50.12230:FF:000001">
    <property type="entry name" value="Methionyl-tRNA formyltransferase"/>
    <property type="match status" value="1"/>
</dbReference>
<dbReference type="Gene3D" id="3.40.50.12230">
    <property type="match status" value="1"/>
</dbReference>
<dbReference type="HAMAP" id="MF_00182">
    <property type="entry name" value="Formyl_trans"/>
    <property type="match status" value="1"/>
</dbReference>
<dbReference type="InterPro" id="IPR005794">
    <property type="entry name" value="Fmt"/>
</dbReference>
<dbReference type="InterPro" id="IPR005793">
    <property type="entry name" value="Formyl_trans_C"/>
</dbReference>
<dbReference type="InterPro" id="IPR002376">
    <property type="entry name" value="Formyl_transf_N"/>
</dbReference>
<dbReference type="InterPro" id="IPR036477">
    <property type="entry name" value="Formyl_transf_N_sf"/>
</dbReference>
<dbReference type="InterPro" id="IPR011034">
    <property type="entry name" value="Formyl_transferase-like_C_sf"/>
</dbReference>
<dbReference type="InterPro" id="IPR001555">
    <property type="entry name" value="GART_AS"/>
</dbReference>
<dbReference type="InterPro" id="IPR044135">
    <property type="entry name" value="Met-tRNA-FMT_C"/>
</dbReference>
<dbReference type="InterPro" id="IPR041711">
    <property type="entry name" value="Met-tRNA-FMT_N"/>
</dbReference>
<dbReference type="NCBIfam" id="TIGR00460">
    <property type="entry name" value="fmt"/>
    <property type="match status" value="1"/>
</dbReference>
<dbReference type="PANTHER" id="PTHR11138">
    <property type="entry name" value="METHIONYL-TRNA FORMYLTRANSFERASE"/>
    <property type="match status" value="1"/>
</dbReference>
<dbReference type="PANTHER" id="PTHR11138:SF5">
    <property type="entry name" value="METHIONYL-TRNA FORMYLTRANSFERASE, MITOCHONDRIAL"/>
    <property type="match status" value="1"/>
</dbReference>
<dbReference type="Pfam" id="PF02911">
    <property type="entry name" value="Formyl_trans_C"/>
    <property type="match status" value="1"/>
</dbReference>
<dbReference type="Pfam" id="PF00551">
    <property type="entry name" value="Formyl_trans_N"/>
    <property type="match status" value="1"/>
</dbReference>
<dbReference type="SUPFAM" id="SSF50486">
    <property type="entry name" value="FMT C-terminal domain-like"/>
    <property type="match status" value="1"/>
</dbReference>
<dbReference type="SUPFAM" id="SSF53328">
    <property type="entry name" value="Formyltransferase"/>
    <property type="match status" value="1"/>
</dbReference>
<dbReference type="PROSITE" id="PS00373">
    <property type="entry name" value="GART"/>
    <property type="match status" value="1"/>
</dbReference>